<sequence>MKFIFYLSVLTGTFLFADSSVQKEDPAPYLVYLKSHFNPCVGVLIKPSWVLAPAHCYLPNLEVMLGNFKSRVRDGTEQTINPIQIVRYWNYSDSAPQDDLMLIKLAKPAMLNPKVQPLPLATTNVRPGTVCLLSGLDWSQENSGRHPDLRQNLEAPVMSDKECQKTEQGKSHRNSLCVKFVKVFSRIFGEVAVATVICKDKLQGIEVGHFMGGDVGIYTNVYKYVSWIENTAKDK</sequence>
<proteinExistence type="evidence at transcript level"/>
<reference key="1">
    <citation type="submission" date="2005-06" db="EMBL/GenBank/DDBJ databases">
        <title>DNA sequences of macaque genes expressed in brain or testis and its evolutionary implications.</title>
        <authorList>
            <consortium name="International consortium for macaque cDNA sequencing and analysis"/>
        </authorList>
    </citation>
    <scope>NUCLEOTIDE SEQUENCE [LARGE SCALE MRNA]</scope>
    <source>
        <tissue>Testis</tissue>
    </source>
</reference>
<comment type="function">
    <text evidence="1 2">Plays a role in male fertility. May have a role in sperm migration or binding to zona-intact eggs. Involved in the activation of the proacrosin/acrosin system.</text>
</comment>
<comment type="subcellular location">
    <subcellularLocation>
        <location evidence="1">Cytoplasmic vesicle</location>
        <location evidence="1">Secretory vesicle</location>
        <location evidence="1">Acrosome</location>
    </subcellularLocation>
    <subcellularLocation>
        <location evidence="1">Secreted</location>
    </subcellularLocation>
</comment>
<comment type="similarity">
    <text evidence="4">Belongs to the peptidase S1 family.</text>
</comment>
<comment type="caution">
    <text evidence="5">Although related to peptidase S1 family, lacks the conserved active Ser residue in position 192 which is replaced by an Ala, suggesting that it has no protease activity. Also lacks metal binding sites Glu in position 67 which is replaced by Asn, and Asn in position 69 which is replaced by Lys.</text>
</comment>
<accession>Q4R7Y7</accession>
<name>PRS37_MACFA</name>
<keyword id="KW-0968">Cytoplasmic vesicle</keyword>
<keyword id="KW-1015">Disulfide bond</keyword>
<keyword id="KW-0278">Fertilization</keyword>
<keyword id="KW-0479">Metal-binding</keyword>
<keyword id="KW-1185">Reference proteome</keyword>
<keyword id="KW-0964">Secreted</keyword>
<keyword id="KW-0732">Signal</keyword>
<gene>
    <name evidence="1" type="primary">PRSS37</name>
    <name type="synonym">TRYX2</name>
    <name type="ORF">QtsA-14071</name>
</gene>
<evidence type="ECO:0000250" key="1">
    <source>
        <dbReference type="UniProtKB" id="A4D1T9"/>
    </source>
</evidence>
<evidence type="ECO:0000250" key="2">
    <source>
        <dbReference type="UniProtKB" id="Q9DAA4"/>
    </source>
</evidence>
<evidence type="ECO:0000255" key="3"/>
<evidence type="ECO:0000255" key="4">
    <source>
        <dbReference type="PROSITE-ProRule" id="PRU00274"/>
    </source>
</evidence>
<evidence type="ECO:0000305" key="5"/>
<dbReference type="EMBL" id="AB168674">
    <property type="protein sequence ID" value="BAE00785.1"/>
    <property type="molecule type" value="mRNA"/>
</dbReference>
<dbReference type="RefSeq" id="NP_001271811.1">
    <property type="nucleotide sequence ID" value="NM_001284882.1"/>
</dbReference>
<dbReference type="SMR" id="Q4R7Y7"/>
<dbReference type="STRING" id="9541.ENSMFAP00000000849"/>
<dbReference type="eggNOG" id="KOG3627">
    <property type="taxonomic scope" value="Eukaryota"/>
</dbReference>
<dbReference type="Proteomes" id="UP000233100">
    <property type="component" value="Unplaced"/>
</dbReference>
<dbReference type="GO" id="GO:0001669">
    <property type="term" value="C:acrosomal vesicle"/>
    <property type="evidence" value="ECO:0000250"/>
    <property type="project" value="UniProtKB"/>
</dbReference>
<dbReference type="GO" id="GO:0005576">
    <property type="term" value="C:extracellular region"/>
    <property type="evidence" value="ECO:0007669"/>
    <property type="project" value="UniProtKB-SubCell"/>
</dbReference>
<dbReference type="GO" id="GO:0046872">
    <property type="term" value="F:metal ion binding"/>
    <property type="evidence" value="ECO:0007669"/>
    <property type="project" value="UniProtKB-KW"/>
</dbReference>
<dbReference type="GO" id="GO:0004252">
    <property type="term" value="F:serine-type endopeptidase activity"/>
    <property type="evidence" value="ECO:0007669"/>
    <property type="project" value="InterPro"/>
</dbReference>
<dbReference type="GO" id="GO:0007339">
    <property type="term" value="P:binding of sperm to zona pellucida"/>
    <property type="evidence" value="ECO:0000250"/>
    <property type="project" value="UniProtKB"/>
</dbReference>
<dbReference type="GO" id="GO:0016477">
    <property type="term" value="P:cell migration"/>
    <property type="evidence" value="ECO:0000250"/>
    <property type="project" value="UniProtKB"/>
</dbReference>
<dbReference type="GO" id="GO:2000344">
    <property type="term" value="P:positive regulation of acrosome reaction"/>
    <property type="evidence" value="ECO:0000250"/>
    <property type="project" value="UniProtKB"/>
</dbReference>
<dbReference type="GO" id="GO:1905516">
    <property type="term" value="P:positive regulation of fertilization"/>
    <property type="evidence" value="ECO:0000250"/>
    <property type="project" value="UniProtKB"/>
</dbReference>
<dbReference type="GO" id="GO:0051604">
    <property type="term" value="P:protein maturation"/>
    <property type="evidence" value="ECO:0000250"/>
    <property type="project" value="UniProtKB"/>
</dbReference>
<dbReference type="GO" id="GO:0006508">
    <property type="term" value="P:proteolysis"/>
    <property type="evidence" value="ECO:0007669"/>
    <property type="project" value="InterPro"/>
</dbReference>
<dbReference type="GO" id="GO:0070613">
    <property type="term" value="P:regulation of protein processing"/>
    <property type="evidence" value="ECO:0000250"/>
    <property type="project" value="UniProtKB"/>
</dbReference>
<dbReference type="FunFam" id="2.40.10.10:FF:000049">
    <property type="entry name" value="probable inactive serine protease 37"/>
    <property type="match status" value="1"/>
</dbReference>
<dbReference type="FunFam" id="2.40.10.10:FF:000005">
    <property type="entry name" value="Serine protease 37"/>
    <property type="match status" value="1"/>
</dbReference>
<dbReference type="Gene3D" id="2.40.10.10">
    <property type="entry name" value="Trypsin-like serine proteases"/>
    <property type="match status" value="2"/>
</dbReference>
<dbReference type="InterPro" id="IPR009003">
    <property type="entry name" value="Peptidase_S1_PA"/>
</dbReference>
<dbReference type="InterPro" id="IPR043504">
    <property type="entry name" value="Peptidase_S1_PA_chymotrypsin"/>
</dbReference>
<dbReference type="InterPro" id="IPR001314">
    <property type="entry name" value="Peptidase_S1A"/>
</dbReference>
<dbReference type="InterPro" id="IPR001254">
    <property type="entry name" value="Trypsin_dom"/>
</dbReference>
<dbReference type="PANTHER" id="PTHR24271:SF61">
    <property type="entry name" value="INACTIVE SERINE PROTEASE 37-RELATED"/>
    <property type="match status" value="1"/>
</dbReference>
<dbReference type="PANTHER" id="PTHR24271">
    <property type="entry name" value="KALLIKREIN-RELATED"/>
    <property type="match status" value="1"/>
</dbReference>
<dbReference type="Pfam" id="PF00089">
    <property type="entry name" value="Trypsin"/>
    <property type="match status" value="1"/>
</dbReference>
<dbReference type="PRINTS" id="PR00722">
    <property type="entry name" value="CHYMOTRYPSIN"/>
</dbReference>
<dbReference type="SMART" id="SM00020">
    <property type="entry name" value="Tryp_SPc"/>
    <property type="match status" value="1"/>
</dbReference>
<dbReference type="SUPFAM" id="SSF50494">
    <property type="entry name" value="Trypsin-like serine proteases"/>
    <property type="match status" value="1"/>
</dbReference>
<dbReference type="PROSITE" id="PS50240">
    <property type="entry name" value="TRYPSIN_DOM"/>
    <property type="match status" value="1"/>
</dbReference>
<feature type="signal peptide" evidence="3">
    <location>
        <begin position="1"/>
        <end position="19"/>
    </location>
</feature>
<feature type="chain" id="PRO_0000326071" description="Probable inactive serine protease 37">
    <location>
        <begin position="20"/>
        <end position="235"/>
    </location>
</feature>
<feature type="domain" description="Peptidase S1" evidence="4">
    <location>
        <begin position="20"/>
        <end position="233"/>
    </location>
</feature>
<feature type="disulfide bond" evidence="4">
    <location>
        <begin position="40"/>
        <end position="56"/>
    </location>
</feature>
<feature type="disulfide bond" evidence="4">
    <location>
        <begin position="131"/>
        <end position="198"/>
    </location>
</feature>
<feature type="disulfide bond" evidence="4">
    <location>
        <begin position="163"/>
        <end position="177"/>
    </location>
</feature>
<protein>
    <recommendedName>
        <fullName evidence="5">Probable inactive serine protease 37</fullName>
    </recommendedName>
    <alternativeName>
        <fullName>Probable inactive trypsin-X2</fullName>
    </alternativeName>
</protein>
<organism>
    <name type="scientific">Macaca fascicularis</name>
    <name type="common">Crab-eating macaque</name>
    <name type="synonym">Cynomolgus monkey</name>
    <dbReference type="NCBI Taxonomy" id="9541"/>
    <lineage>
        <taxon>Eukaryota</taxon>
        <taxon>Metazoa</taxon>
        <taxon>Chordata</taxon>
        <taxon>Craniata</taxon>
        <taxon>Vertebrata</taxon>
        <taxon>Euteleostomi</taxon>
        <taxon>Mammalia</taxon>
        <taxon>Eutheria</taxon>
        <taxon>Euarchontoglires</taxon>
        <taxon>Primates</taxon>
        <taxon>Haplorrhini</taxon>
        <taxon>Catarrhini</taxon>
        <taxon>Cercopithecidae</taxon>
        <taxon>Cercopithecinae</taxon>
        <taxon>Macaca</taxon>
    </lineage>
</organism>